<name>GYL1_YEAST</name>
<keyword id="KW-0007">Acetylation</keyword>
<keyword id="KW-0175">Coiled coil</keyword>
<keyword id="KW-0963">Cytoplasm</keyword>
<keyword id="KW-0931">ER-Golgi transport</keyword>
<keyword id="KW-0268">Exocytosis</keyword>
<keyword id="KW-0343">GTPase activation</keyword>
<keyword id="KW-1017">Isopeptide bond</keyword>
<keyword id="KW-0597">Phosphoprotein</keyword>
<keyword id="KW-0653">Protein transport</keyword>
<keyword id="KW-1185">Reference proteome</keyword>
<keyword id="KW-0813">Transport</keyword>
<keyword id="KW-0832">Ubl conjugation</keyword>
<reference key="1">
    <citation type="journal article" date="1997" name="Nature">
        <title>The nucleotide sequence of Saccharomyces cerevisiae chromosome XIII.</title>
        <authorList>
            <person name="Bowman S."/>
            <person name="Churcher C.M."/>
            <person name="Badcock K."/>
            <person name="Brown D."/>
            <person name="Chillingworth T."/>
            <person name="Connor R."/>
            <person name="Dedman K."/>
            <person name="Devlin K."/>
            <person name="Gentles S."/>
            <person name="Hamlin N."/>
            <person name="Hunt S."/>
            <person name="Jagels K."/>
            <person name="Lye G."/>
            <person name="Moule S."/>
            <person name="Odell C."/>
            <person name="Pearson D."/>
            <person name="Rajandream M.A."/>
            <person name="Rice P."/>
            <person name="Skelton J."/>
            <person name="Walsh S.V."/>
            <person name="Whitehead S."/>
            <person name="Barrell B.G."/>
        </authorList>
    </citation>
    <scope>NUCLEOTIDE SEQUENCE [LARGE SCALE GENOMIC DNA]</scope>
    <source>
        <strain>ATCC 204508 / S288c</strain>
    </source>
</reference>
<reference key="2">
    <citation type="journal article" date="2014" name="G3 (Bethesda)">
        <title>The reference genome sequence of Saccharomyces cerevisiae: Then and now.</title>
        <authorList>
            <person name="Engel S.R."/>
            <person name="Dietrich F.S."/>
            <person name="Fisk D.G."/>
            <person name="Binkley G."/>
            <person name="Balakrishnan R."/>
            <person name="Costanzo M.C."/>
            <person name="Dwight S.S."/>
            <person name="Hitz B.C."/>
            <person name="Karra K."/>
            <person name="Nash R.S."/>
            <person name="Weng S."/>
            <person name="Wong E.D."/>
            <person name="Lloyd P."/>
            <person name="Skrzypek M.S."/>
            <person name="Miyasato S.R."/>
            <person name="Simison M."/>
            <person name="Cherry J.M."/>
        </authorList>
    </citation>
    <scope>GENOME REANNOTATION</scope>
    <source>
        <strain>ATCC 204508 / S288c</strain>
    </source>
</reference>
<reference key="3">
    <citation type="journal article" date="2003" name="Nature">
        <title>Global analysis of protein expression in yeast.</title>
        <authorList>
            <person name="Ghaemmaghami S."/>
            <person name="Huh W.-K."/>
            <person name="Bower K."/>
            <person name="Howson R.W."/>
            <person name="Belle A."/>
            <person name="Dephoure N."/>
            <person name="O'Shea E.K."/>
            <person name="Weissman J.S."/>
        </authorList>
    </citation>
    <scope>LEVEL OF PROTEIN EXPRESSION [LARGE SCALE ANALYSIS]</scope>
</reference>
<reference key="4">
    <citation type="journal article" date="2005" name="Mol. Cell. Proteomics">
        <title>A proteomic strategy for gaining insights into protein sumoylation in yeast.</title>
        <authorList>
            <person name="Denison C."/>
            <person name="Rudner A.D."/>
            <person name="Gerber S.A."/>
            <person name="Bakalarski C.E."/>
            <person name="Moazed D."/>
            <person name="Gygi S.P."/>
        </authorList>
    </citation>
    <scope>SUMOYLATION [LARGE SCALE ANALYSIS] AT LYS-498</scope>
    <scope>IDENTIFICATION BY MASS SPECTROMETRY</scope>
    <source>
        <strain>EJY251-11b</strain>
    </source>
</reference>
<reference key="5">
    <citation type="journal article" date="2004" name="J. Cell Sci.">
        <title>Gyp5p and Gyl1p are involved in the control of polarized exocytosis in budding yeast.</title>
        <authorList>
            <person name="Chesneau L."/>
            <person name="Dupre S."/>
            <person name="Burdina A."/>
            <person name="Roger J."/>
            <person name="Le Panse S."/>
            <person name="Jacquet M."/>
            <person name="Cuif M.-H."/>
        </authorList>
    </citation>
    <scope>FUNCTION</scope>
    <scope>SUBCELLULAR LOCATION</scope>
    <scope>PHOSPHORYLATION</scope>
    <scope>INTERACTION WITH GYP5</scope>
    <scope>IDENTIFICATION IN SEC4-CONTAINING COMPLEXES</scope>
</reference>
<reference key="6">
    <citation type="journal article" date="2005" name="Genetics">
        <title>Interaction of the Saccharomyces cerevisiae cortical actin patch protein Rvs167p with proteins involved in ER to Golgi vesicle trafficking.</title>
        <authorList>
            <person name="Friesen H."/>
            <person name="Colwill K."/>
            <person name="Robertson K."/>
            <person name="Schub O."/>
            <person name="Andrews B."/>
        </authorList>
    </citation>
    <scope>FUNCTION</scope>
    <scope>INTERACTION WITH GYP5 AND RVS167</scope>
</reference>
<reference key="7">
    <citation type="journal article" date="2007" name="J. Proteome Res.">
        <title>Large-scale phosphorylation analysis of alpha-factor-arrested Saccharomyces cerevisiae.</title>
        <authorList>
            <person name="Li X."/>
            <person name="Gerber S.A."/>
            <person name="Rudner A.D."/>
            <person name="Beausoleil S.A."/>
            <person name="Haas W."/>
            <person name="Villen J."/>
            <person name="Elias J.E."/>
            <person name="Gygi S.P."/>
        </authorList>
    </citation>
    <scope>PHOSPHORYLATION [LARGE SCALE ANALYSIS] AT THR-17 AND SER-37</scope>
    <scope>IDENTIFICATION BY MASS SPECTROMETRY [LARGE SCALE ANALYSIS]</scope>
    <source>
        <strain>ADR376</strain>
    </source>
</reference>
<reference key="8">
    <citation type="journal article" date="2008" name="Mol. Cell. Proteomics">
        <title>A multidimensional chromatography technology for in-depth phosphoproteome analysis.</title>
        <authorList>
            <person name="Albuquerque C.P."/>
            <person name="Smolka M.B."/>
            <person name="Payne S.H."/>
            <person name="Bafna V."/>
            <person name="Eng J."/>
            <person name="Zhou H."/>
        </authorList>
    </citation>
    <scope>PHOSPHORYLATION [LARGE SCALE ANALYSIS] AT THR-17; SER-37; SER-73 AND SER-139</scope>
    <scope>IDENTIFICATION BY MASS SPECTROMETRY [LARGE SCALE ANALYSIS]</scope>
</reference>
<reference key="9">
    <citation type="journal article" date="2012" name="Proc. Natl. Acad. Sci. U.S.A.">
        <title>N-terminal acetylome analyses and functional insights of the N-terminal acetyltransferase NatB.</title>
        <authorList>
            <person name="Van Damme P."/>
            <person name="Lasa M."/>
            <person name="Polevoda B."/>
            <person name="Gazquez C."/>
            <person name="Elosegui-Artola A."/>
            <person name="Kim D.S."/>
            <person name="De Juan-Pardo E."/>
            <person name="Demeyer K."/>
            <person name="Hole K."/>
            <person name="Larrea E."/>
            <person name="Timmerman E."/>
            <person name="Prieto J."/>
            <person name="Arnesen T."/>
            <person name="Sherman F."/>
            <person name="Gevaert K."/>
            <person name="Aldabe R."/>
        </authorList>
    </citation>
    <scope>ACETYLATION [LARGE SCALE ANALYSIS] AT MET-1</scope>
    <scope>IDENTIFICATION BY MASS SPECTROMETRY [LARGE SCALE ANALYSIS]</scope>
</reference>
<sequence>MNSNEDIHEERIEVPRTPHQTQPEKDSDRIALRDEISVPEGDEKAYSDEKVEMATTNASSNFGSNESAKDGESIGAFSNPHEALMQSKLREESQSKTILPSDDLSQQLETEESKVEEALKRITSPPLPPRADCIEESASALKSSLPPVLAGNKNDQAPLDRPQLPPRQVVNAETLHLKAPHGNATPSKSPTSAVGNSSSSTPPTLPPRRIEDPLDLAAQKHFLASTFKRNMLFYKSEDNSIKCDLDKNILNLKEDSKKINNNEIPEEVSSFWLKVIGDYQNILINDIETLHFQLSRGIPAAYRLVVWQLVSYAKSKSFDPIYETYLTEMAPFDVQEFENQLKMMDEVPSEYVKRISNVLKAYLLFDPECEFSTDIAYIINMILDVCEEEANAFGLLVRLMKVYGLRLLFLPSASEIDILCYKFDRLVEEFYPEIHNHMVEKGVRSSMFLPGFFTTLFQKKLPTEIQPRIGDMVFLEGIDSIMRILATLLSNSRDHLLKMGFDDMLELLKSGLLDAYIKQNDGTRGDTLLSNECMDKLLQDSMMKVAITPKTMKKYSSEYEEIHRLDNEKEVQYKSITEKNLHLQKHVRKLENDYTSLNREHVTIANELVKNRLNIESVLNENNGYKLQILDLKKKLDSEKKKQVLGVYVPNDLKKDLEETMKKNTQVMDENLKLQDRISELERLIEEIKTANKNGTLFEYSNSKNNPLGAGWSGFKKVFK</sequence>
<comment type="function">
    <text evidence="5 7">Probable GTPase-activating protein which stimulates the GTP hydrolysis rate by GYP5 of YPT1 and SEC4. Involved in ER to Golgi trafficking and polarized exocytosis.</text>
</comment>
<comment type="subunit">
    <text evidence="5 7">Interacts with GYP5 and RVS167. Is part of SEC4-containing complexes.</text>
</comment>
<comment type="interaction">
    <interactant intactId="EBI-27427">
        <id>Q04322</id>
    </interactant>
    <interactant intactId="EBI-38508">
        <id>Q12344</id>
        <label>GYP5</label>
    </interactant>
    <organismsDiffer>false</organismsDiffer>
    <experiments>3</experiments>
</comment>
<comment type="interaction">
    <interactant intactId="EBI-27427">
        <id>Q04322</id>
    </interactant>
    <interactant intactId="EBI-23329">
        <id>P53281</id>
        <label>LSB1</label>
    </interactant>
    <organismsDiffer>false</organismsDiffer>
    <experiments>2</experiments>
</comment>
<comment type="interaction">
    <interactant intactId="EBI-27427">
        <id>Q04322</id>
    </interactant>
    <interactant intactId="EBI-22980">
        <id>P43603</id>
        <label>LSB3</label>
    </interactant>
    <organismsDiffer>false</organismsDiffer>
    <experiments>6</experiments>
</comment>
<comment type="interaction">
    <interactant intactId="EBI-27427">
        <id>Q04322</id>
    </interactant>
    <interactant intactId="EBI-14624">
        <id>O14455</id>
        <label>RPL36B</label>
    </interactant>
    <organismsDiffer>false</organismsDiffer>
    <experiments>2</experiments>
</comment>
<comment type="interaction">
    <interactant intactId="EBI-27427">
        <id>Q04322</id>
    </interactant>
    <interactant intactId="EBI-14500">
        <id>P39743</id>
        <label>RVS167</label>
    </interactant>
    <organismsDiffer>false</organismsDiffer>
    <experiments>8</experiments>
</comment>
<comment type="interaction">
    <interactant intactId="EBI-27427">
        <id>Q04322</id>
    </interactant>
    <interactant intactId="EBI-29324">
        <id>P53049</id>
        <label>YOR1</label>
    </interactant>
    <organismsDiffer>false</organismsDiffer>
    <experiments>2</experiments>
</comment>
<comment type="interaction">
    <interactant intactId="EBI-27427">
        <id>Q04322</id>
    </interactant>
    <interactant intactId="EBI-24460">
        <id>P32793</id>
        <label>YSC84</label>
    </interactant>
    <organismsDiffer>false</organismsDiffer>
    <experiments>6</experiments>
</comment>
<comment type="subcellular location">
    <subcellularLocation>
        <location evidence="5">Cytoplasm</location>
    </subcellularLocation>
    <subcellularLocation>
        <location evidence="5">Bud</location>
    </subcellularLocation>
    <subcellularLocation>
        <location evidence="5">Bud neck</location>
    </subcellularLocation>
</comment>
<comment type="miscellaneous">
    <text evidence="4">Present with 2010 molecules/cell in log phase SD medium.</text>
</comment>
<comment type="similarity">
    <text evidence="8">Belongs to the GYP5 family.</text>
</comment>
<protein>
    <recommendedName>
        <fullName>Probable GTPase-activating protein GYL1</fullName>
    </recommendedName>
    <alternativeName>
        <fullName>GYP5-like protein 1</fullName>
    </alternativeName>
</protein>
<evidence type="ECO:0000255" key="1"/>
<evidence type="ECO:0000255" key="2">
    <source>
        <dbReference type="PROSITE-ProRule" id="PRU00163"/>
    </source>
</evidence>
<evidence type="ECO:0000256" key="3">
    <source>
        <dbReference type="SAM" id="MobiDB-lite"/>
    </source>
</evidence>
<evidence type="ECO:0000269" key="4">
    <source>
    </source>
</evidence>
<evidence type="ECO:0000269" key="5">
    <source>
    </source>
</evidence>
<evidence type="ECO:0000269" key="6">
    <source>
    </source>
</evidence>
<evidence type="ECO:0000269" key="7">
    <source>
    </source>
</evidence>
<evidence type="ECO:0000305" key="8"/>
<evidence type="ECO:0007744" key="9">
    <source>
    </source>
</evidence>
<evidence type="ECO:0007744" key="10">
    <source>
    </source>
</evidence>
<evidence type="ECO:0007744" key="11">
    <source>
    </source>
</evidence>
<gene>
    <name type="primary">GYL1</name>
    <name type="synonym">APP2</name>
    <name type="ordered locus">YMR192W</name>
    <name type="ORF">YM9646.04</name>
</gene>
<feature type="chain" id="PRO_0000208062" description="Probable GTPase-activating protein GYL1">
    <location>
        <begin position="1"/>
        <end position="720"/>
    </location>
</feature>
<feature type="domain" description="Rab-GAP TBC" evidence="2">
    <location>
        <begin position="297"/>
        <end position="477"/>
    </location>
</feature>
<feature type="region of interest" description="Disordered" evidence="3">
    <location>
        <begin position="1"/>
        <end position="132"/>
    </location>
</feature>
<feature type="region of interest" description="Disordered" evidence="3">
    <location>
        <begin position="144"/>
        <end position="164"/>
    </location>
</feature>
<feature type="region of interest" description="Disordered" evidence="3">
    <location>
        <begin position="179"/>
        <end position="210"/>
    </location>
</feature>
<feature type="coiled-coil region" evidence="1">
    <location>
        <begin position="572"/>
        <end position="696"/>
    </location>
</feature>
<feature type="compositionally biased region" description="Basic and acidic residues" evidence="3">
    <location>
        <begin position="1"/>
        <end position="52"/>
    </location>
</feature>
<feature type="compositionally biased region" description="Polar residues" evidence="3">
    <location>
        <begin position="54"/>
        <end position="66"/>
    </location>
</feature>
<feature type="compositionally biased region" description="Polar residues" evidence="3">
    <location>
        <begin position="95"/>
        <end position="108"/>
    </location>
</feature>
<feature type="compositionally biased region" description="Basic and acidic residues" evidence="3">
    <location>
        <begin position="111"/>
        <end position="120"/>
    </location>
</feature>
<feature type="compositionally biased region" description="Polar residues" evidence="3">
    <location>
        <begin position="184"/>
        <end position="196"/>
    </location>
</feature>
<feature type="modified residue" description="N-acetylmethionine" evidence="11">
    <location>
        <position position="1"/>
    </location>
</feature>
<feature type="modified residue" description="Phosphothreonine" evidence="9 10">
    <location>
        <position position="17"/>
    </location>
</feature>
<feature type="modified residue" description="Phosphoserine" evidence="9 10">
    <location>
        <position position="37"/>
    </location>
</feature>
<feature type="modified residue" description="Phosphoserine" evidence="10">
    <location>
        <position position="73"/>
    </location>
</feature>
<feature type="modified residue" description="Phosphoserine" evidence="10">
    <location>
        <position position="139"/>
    </location>
</feature>
<feature type="cross-link" description="Glycyl lysine isopeptide (Lys-Gly) (interchain with G-Cter in SUMO)" evidence="6">
    <location>
        <position position="498"/>
    </location>
</feature>
<proteinExistence type="evidence at protein level"/>
<dbReference type="EMBL" id="Z47815">
    <property type="protein sequence ID" value="CAA87813.1"/>
    <property type="molecule type" value="Genomic_DNA"/>
</dbReference>
<dbReference type="EMBL" id="BK006946">
    <property type="protein sequence ID" value="DAA10090.1"/>
    <property type="molecule type" value="Genomic_DNA"/>
</dbReference>
<dbReference type="PIR" id="S50920">
    <property type="entry name" value="S50920"/>
</dbReference>
<dbReference type="RefSeq" id="NP_013917.1">
    <property type="nucleotide sequence ID" value="NM_001182698.1"/>
</dbReference>
<dbReference type="SMR" id="Q04322"/>
<dbReference type="BioGRID" id="35370">
    <property type="interactions" value="83"/>
</dbReference>
<dbReference type="DIP" id="DIP-2891N"/>
<dbReference type="FunCoup" id="Q04322">
    <property type="interactions" value="230"/>
</dbReference>
<dbReference type="IntAct" id="Q04322">
    <property type="interactions" value="21"/>
</dbReference>
<dbReference type="MINT" id="Q04322"/>
<dbReference type="STRING" id="4932.YMR192W"/>
<dbReference type="GlyGen" id="Q04322">
    <property type="glycosylation" value="1 site"/>
</dbReference>
<dbReference type="iPTMnet" id="Q04322"/>
<dbReference type="PaxDb" id="4932-YMR192W"/>
<dbReference type="PeptideAtlas" id="Q04322"/>
<dbReference type="EnsemblFungi" id="YMR192W_mRNA">
    <property type="protein sequence ID" value="YMR192W"/>
    <property type="gene ID" value="YMR192W"/>
</dbReference>
<dbReference type="GeneID" id="855230"/>
<dbReference type="KEGG" id="sce:YMR192W"/>
<dbReference type="AGR" id="SGD:S000004804"/>
<dbReference type="SGD" id="S000004804">
    <property type="gene designation" value="GYL1"/>
</dbReference>
<dbReference type="VEuPathDB" id="FungiDB:YMR192W"/>
<dbReference type="eggNOG" id="KOG1102">
    <property type="taxonomic scope" value="Eukaryota"/>
</dbReference>
<dbReference type="HOGENOM" id="CLU_005350_11_0_1"/>
<dbReference type="InParanoid" id="Q04322"/>
<dbReference type="OMA" id="HESECFC"/>
<dbReference type="OrthoDB" id="295078at2759"/>
<dbReference type="BioCyc" id="YEAST:G3O-32879-MONOMER"/>
<dbReference type="BioGRID-ORCS" id="855230">
    <property type="hits" value="0 hits in 10 CRISPR screens"/>
</dbReference>
<dbReference type="PRO" id="PR:Q04322"/>
<dbReference type="Proteomes" id="UP000002311">
    <property type="component" value="Chromosome XIII"/>
</dbReference>
<dbReference type="RNAct" id="Q04322">
    <property type="molecule type" value="protein"/>
</dbReference>
<dbReference type="GO" id="GO:0005933">
    <property type="term" value="C:cellular bud"/>
    <property type="evidence" value="ECO:0007005"/>
    <property type="project" value="SGD"/>
</dbReference>
<dbReference type="GO" id="GO:0005935">
    <property type="term" value="C:cellular bud neck"/>
    <property type="evidence" value="ECO:0000314"/>
    <property type="project" value="SGD"/>
</dbReference>
<dbReference type="GO" id="GO:0005934">
    <property type="term" value="C:cellular bud tip"/>
    <property type="evidence" value="ECO:0000314"/>
    <property type="project" value="SGD"/>
</dbReference>
<dbReference type="GO" id="GO:0005737">
    <property type="term" value="C:cytoplasm"/>
    <property type="evidence" value="ECO:0007005"/>
    <property type="project" value="SGD"/>
</dbReference>
<dbReference type="GO" id="GO:0005798">
    <property type="term" value="C:Golgi-associated vesicle"/>
    <property type="evidence" value="ECO:0000314"/>
    <property type="project" value="SGD"/>
</dbReference>
<dbReference type="GO" id="GO:0000131">
    <property type="term" value="C:incipient cellular bud site"/>
    <property type="evidence" value="ECO:0000314"/>
    <property type="project" value="SGD"/>
</dbReference>
<dbReference type="GO" id="GO:0005739">
    <property type="term" value="C:mitochondrion"/>
    <property type="evidence" value="ECO:0007005"/>
    <property type="project" value="SGD"/>
</dbReference>
<dbReference type="GO" id="GO:0005886">
    <property type="term" value="C:plasma membrane"/>
    <property type="evidence" value="ECO:0000314"/>
    <property type="project" value="SGD"/>
</dbReference>
<dbReference type="GO" id="GO:0005096">
    <property type="term" value="F:GTPase activator activity"/>
    <property type="evidence" value="ECO:0000318"/>
    <property type="project" value="GO_Central"/>
</dbReference>
<dbReference type="GO" id="GO:0006888">
    <property type="term" value="P:endoplasmic reticulum to Golgi vesicle-mediated transport"/>
    <property type="evidence" value="ECO:0000316"/>
    <property type="project" value="SGD"/>
</dbReference>
<dbReference type="GO" id="GO:0006887">
    <property type="term" value="P:exocytosis"/>
    <property type="evidence" value="ECO:0007669"/>
    <property type="project" value="UniProtKB-KW"/>
</dbReference>
<dbReference type="GO" id="GO:0015031">
    <property type="term" value="P:protein transport"/>
    <property type="evidence" value="ECO:0007669"/>
    <property type="project" value="UniProtKB-KW"/>
</dbReference>
<dbReference type="GO" id="GO:0017157">
    <property type="term" value="P:regulation of exocytosis"/>
    <property type="evidence" value="ECO:0000316"/>
    <property type="project" value="SGD"/>
</dbReference>
<dbReference type="Gene3D" id="1.10.8.270">
    <property type="entry name" value="putative rabgap domain of human tbc1 domain family member 14 like domains"/>
    <property type="match status" value="1"/>
</dbReference>
<dbReference type="Gene3D" id="1.10.472.80">
    <property type="entry name" value="Ypt/Rab-GAP domain of gyp1p, domain 3"/>
    <property type="match status" value="1"/>
</dbReference>
<dbReference type="InterPro" id="IPR000195">
    <property type="entry name" value="Rab-GAP-TBC_dom"/>
</dbReference>
<dbReference type="InterPro" id="IPR035969">
    <property type="entry name" value="Rab-GAP_TBC_sf"/>
</dbReference>
<dbReference type="InterPro" id="IPR050302">
    <property type="entry name" value="Rab_GAP_TBC_domain"/>
</dbReference>
<dbReference type="PANTHER" id="PTHR47219:SF9">
    <property type="entry name" value="GTPASE ACTIVATING PROTEIN AND CENTROSOME-ASSOCIATED, ISOFORM B"/>
    <property type="match status" value="1"/>
</dbReference>
<dbReference type="PANTHER" id="PTHR47219">
    <property type="entry name" value="RAB GTPASE-ACTIVATING PROTEIN 1-LIKE"/>
    <property type="match status" value="1"/>
</dbReference>
<dbReference type="Pfam" id="PF23436">
    <property type="entry name" value="RabGap-TBC_2"/>
    <property type="match status" value="1"/>
</dbReference>
<dbReference type="SMART" id="SM00164">
    <property type="entry name" value="TBC"/>
    <property type="match status" value="1"/>
</dbReference>
<dbReference type="SUPFAM" id="SSF47923">
    <property type="entry name" value="Ypt/Rab-GAP domain of gyp1p"/>
    <property type="match status" value="2"/>
</dbReference>
<dbReference type="PROSITE" id="PS50086">
    <property type="entry name" value="TBC_RABGAP"/>
    <property type="match status" value="1"/>
</dbReference>
<accession>Q04322</accession>
<accession>D6W016</accession>
<organism>
    <name type="scientific">Saccharomyces cerevisiae (strain ATCC 204508 / S288c)</name>
    <name type="common">Baker's yeast</name>
    <dbReference type="NCBI Taxonomy" id="559292"/>
    <lineage>
        <taxon>Eukaryota</taxon>
        <taxon>Fungi</taxon>
        <taxon>Dikarya</taxon>
        <taxon>Ascomycota</taxon>
        <taxon>Saccharomycotina</taxon>
        <taxon>Saccharomycetes</taxon>
        <taxon>Saccharomycetales</taxon>
        <taxon>Saccharomycetaceae</taxon>
        <taxon>Saccharomyces</taxon>
    </lineage>
</organism>